<proteinExistence type="inferred from homology"/>
<reference key="1">
    <citation type="submission" date="2008-10" db="EMBL/GenBank/DDBJ databases">
        <title>Genome sequence of Bacillus cereus G9842.</title>
        <authorList>
            <person name="Dodson R.J."/>
            <person name="Durkin A.S."/>
            <person name="Rosovitz M.J."/>
            <person name="Rasko D.A."/>
            <person name="Hoffmaster A."/>
            <person name="Ravel J."/>
            <person name="Sutton G."/>
        </authorList>
    </citation>
    <scope>NUCLEOTIDE SEQUENCE [LARGE SCALE GENOMIC DNA]</scope>
    <source>
        <strain>G9842</strain>
    </source>
</reference>
<organism>
    <name type="scientific">Bacillus cereus (strain G9842)</name>
    <dbReference type="NCBI Taxonomy" id="405531"/>
    <lineage>
        <taxon>Bacteria</taxon>
        <taxon>Bacillati</taxon>
        <taxon>Bacillota</taxon>
        <taxon>Bacilli</taxon>
        <taxon>Bacillales</taxon>
        <taxon>Bacillaceae</taxon>
        <taxon>Bacillus</taxon>
        <taxon>Bacillus cereus group</taxon>
    </lineage>
</organism>
<protein>
    <recommendedName>
        <fullName evidence="1">Imidazoleglycerol-phosphate dehydratase</fullName>
        <shortName evidence="1">IGPD</shortName>
        <ecNumber evidence="1">4.2.1.19</ecNumber>
    </recommendedName>
</protein>
<evidence type="ECO:0000255" key="1">
    <source>
        <dbReference type="HAMAP-Rule" id="MF_00076"/>
    </source>
</evidence>
<gene>
    <name evidence="1" type="primary">hisB</name>
    <name type="ordered locus">BCG9842_B3884</name>
</gene>
<accession>B7INA0</accession>
<name>HIS7_BACC2</name>
<feature type="chain" id="PRO_1000117078" description="Imidazoleglycerol-phosphate dehydratase">
    <location>
        <begin position="1"/>
        <end position="194"/>
    </location>
</feature>
<sequence>MRQSSQVRQTTETKIKLSLQLDESTNVSIQTGIGFFDHMLTLFARHGRFGLQVEAEGDVFVDAHHTVEDVGIVLGNCLKEALQNKERINRYGSAYVPMDESLGFVAIDISGRSYCVFQGELTNPKLGDFDTELTEEFFRAVAHAANITLHARVLYGSNTHHKIEALFKAFGRALREAVEKNANITGVNSTKGML</sequence>
<keyword id="KW-0028">Amino-acid biosynthesis</keyword>
<keyword id="KW-0963">Cytoplasm</keyword>
<keyword id="KW-0368">Histidine biosynthesis</keyword>
<keyword id="KW-0456">Lyase</keyword>
<dbReference type="EC" id="4.2.1.19" evidence="1"/>
<dbReference type="EMBL" id="CP001186">
    <property type="protein sequence ID" value="ACK98331.1"/>
    <property type="molecule type" value="Genomic_DNA"/>
</dbReference>
<dbReference type="RefSeq" id="WP_001249962.1">
    <property type="nucleotide sequence ID" value="NC_011772.1"/>
</dbReference>
<dbReference type="SMR" id="B7INA0"/>
<dbReference type="KEGG" id="bcg:BCG9842_B3884"/>
<dbReference type="HOGENOM" id="CLU_044308_3_0_9"/>
<dbReference type="UniPathway" id="UPA00031">
    <property type="reaction ID" value="UER00011"/>
</dbReference>
<dbReference type="Proteomes" id="UP000006744">
    <property type="component" value="Chromosome"/>
</dbReference>
<dbReference type="GO" id="GO:0005737">
    <property type="term" value="C:cytoplasm"/>
    <property type="evidence" value="ECO:0007669"/>
    <property type="project" value="UniProtKB-SubCell"/>
</dbReference>
<dbReference type="GO" id="GO:0004424">
    <property type="term" value="F:imidazoleglycerol-phosphate dehydratase activity"/>
    <property type="evidence" value="ECO:0007669"/>
    <property type="project" value="UniProtKB-UniRule"/>
</dbReference>
<dbReference type="GO" id="GO:0000105">
    <property type="term" value="P:L-histidine biosynthetic process"/>
    <property type="evidence" value="ECO:0007669"/>
    <property type="project" value="UniProtKB-UniRule"/>
</dbReference>
<dbReference type="CDD" id="cd07914">
    <property type="entry name" value="IGPD"/>
    <property type="match status" value="1"/>
</dbReference>
<dbReference type="FunFam" id="3.30.230.40:FF:000001">
    <property type="entry name" value="Imidazoleglycerol-phosphate dehydratase HisB"/>
    <property type="match status" value="1"/>
</dbReference>
<dbReference type="FunFam" id="3.30.230.40:FF:000003">
    <property type="entry name" value="Imidazoleglycerol-phosphate dehydratase HisB"/>
    <property type="match status" value="1"/>
</dbReference>
<dbReference type="Gene3D" id="3.30.230.40">
    <property type="entry name" value="Imidazole glycerol phosphate dehydratase, domain 1"/>
    <property type="match status" value="2"/>
</dbReference>
<dbReference type="HAMAP" id="MF_00076">
    <property type="entry name" value="HisB"/>
    <property type="match status" value="1"/>
</dbReference>
<dbReference type="InterPro" id="IPR038494">
    <property type="entry name" value="IGPD_sf"/>
</dbReference>
<dbReference type="InterPro" id="IPR000807">
    <property type="entry name" value="ImidazoleglycerolP_deHydtase"/>
</dbReference>
<dbReference type="InterPro" id="IPR020565">
    <property type="entry name" value="ImidazoleglycerP_deHydtase_CS"/>
</dbReference>
<dbReference type="InterPro" id="IPR020568">
    <property type="entry name" value="Ribosomal_Su5_D2-typ_SF"/>
</dbReference>
<dbReference type="NCBIfam" id="NF002107">
    <property type="entry name" value="PRK00951.1-2"/>
    <property type="match status" value="1"/>
</dbReference>
<dbReference type="NCBIfam" id="NF002111">
    <property type="entry name" value="PRK00951.2-1"/>
    <property type="match status" value="1"/>
</dbReference>
<dbReference type="NCBIfam" id="NF002114">
    <property type="entry name" value="PRK00951.2-4"/>
    <property type="match status" value="1"/>
</dbReference>
<dbReference type="PANTHER" id="PTHR23133:SF2">
    <property type="entry name" value="IMIDAZOLEGLYCEROL-PHOSPHATE DEHYDRATASE"/>
    <property type="match status" value="1"/>
</dbReference>
<dbReference type="PANTHER" id="PTHR23133">
    <property type="entry name" value="IMIDAZOLEGLYCEROL-PHOSPHATE DEHYDRATASE HIS7"/>
    <property type="match status" value="1"/>
</dbReference>
<dbReference type="Pfam" id="PF00475">
    <property type="entry name" value="IGPD"/>
    <property type="match status" value="1"/>
</dbReference>
<dbReference type="SUPFAM" id="SSF54211">
    <property type="entry name" value="Ribosomal protein S5 domain 2-like"/>
    <property type="match status" value="2"/>
</dbReference>
<dbReference type="PROSITE" id="PS00954">
    <property type="entry name" value="IGP_DEHYDRATASE_1"/>
    <property type="match status" value="1"/>
</dbReference>
<dbReference type="PROSITE" id="PS00955">
    <property type="entry name" value="IGP_DEHYDRATASE_2"/>
    <property type="match status" value="1"/>
</dbReference>
<comment type="catalytic activity">
    <reaction evidence="1">
        <text>D-erythro-1-(imidazol-4-yl)glycerol 3-phosphate = 3-(imidazol-4-yl)-2-oxopropyl phosphate + H2O</text>
        <dbReference type="Rhea" id="RHEA:11040"/>
        <dbReference type="ChEBI" id="CHEBI:15377"/>
        <dbReference type="ChEBI" id="CHEBI:57766"/>
        <dbReference type="ChEBI" id="CHEBI:58278"/>
        <dbReference type="EC" id="4.2.1.19"/>
    </reaction>
</comment>
<comment type="pathway">
    <text evidence="1">Amino-acid biosynthesis; L-histidine biosynthesis; L-histidine from 5-phospho-alpha-D-ribose 1-diphosphate: step 6/9.</text>
</comment>
<comment type="subcellular location">
    <subcellularLocation>
        <location evidence="1">Cytoplasm</location>
    </subcellularLocation>
</comment>
<comment type="similarity">
    <text evidence="1">Belongs to the imidazoleglycerol-phosphate dehydratase family.</text>
</comment>